<dbReference type="EC" id="2.7.1.35" evidence="1"/>
<dbReference type="EMBL" id="CP000058">
    <property type="protein sequence ID" value="AAZ36132.1"/>
    <property type="molecule type" value="Genomic_DNA"/>
</dbReference>
<dbReference type="RefSeq" id="WP_004659124.1">
    <property type="nucleotide sequence ID" value="NC_005773.3"/>
</dbReference>
<dbReference type="SMR" id="Q48BL6"/>
<dbReference type="KEGG" id="psp:PSPPH_5152"/>
<dbReference type="eggNOG" id="COG2240">
    <property type="taxonomic scope" value="Bacteria"/>
</dbReference>
<dbReference type="HOGENOM" id="CLU_046496_3_0_6"/>
<dbReference type="UniPathway" id="UPA01068">
    <property type="reaction ID" value="UER00298"/>
</dbReference>
<dbReference type="Proteomes" id="UP000000551">
    <property type="component" value="Chromosome"/>
</dbReference>
<dbReference type="GO" id="GO:0005829">
    <property type="term" value="C:cytosol"/>
    <property type="evidence" value="ECO:0007669"/>
    <property type="project" value="TreeGrafter"/>
</dbReference>
<dbReference type="GO" id="GO:0005524">
    <property type="term" value="F:ATP binding"/>
    <property type="evidence" value="ECO:0007669"/>
    <property type="project" value="UniProtKB-UniRule"/>
</dbReference>
<dbReference type="GO" id="GO:0000287">
    <property type="term" value="F:magnesium ion binding"/>
    <property type="evidence" value="ECO:0007669"/>
    <property type="project" value="UniProtKB-UniRule"/>
</dbReference>
<dbReference type="GO" id="GO:0008478">
    <property type="term" value="F:pyridoxal kinase activity"/>
    <property type="evidence" value="ECO:0007669"/>
    <property type="project" value="UniProtKB-UniRule"/>
</dbReference>
<dbReference type="GO" id="GO:0009443">
    <property type="term" value="P:pyridoxal 5'-phosphate salvage"/>
    <property type="evidence" value="ECO:0007669"/>
    <property type="project" value="UniProtKB-UniRule"/>
</dbReference>
<dbReference type="CDD" id="cd01173">
    <property type="entry name" value="pyridoxal_pyridoxamine_kinase"/>
    <property type="match status" value="1"/>
</dbReference>
<dbReference type="FunFam" id="3.40.1190.20:FF:000008">
    <property type="entry name" value="Pyridoxal kinase PdxY"/>
    <property type="match status" value="1"/>
</dbReference>
<dbReference type="Gene3D" id="3.40.1190.20">
    <property type="match status" value="1"/>
</dbReference>
<dbReference type="HAMAP" id="MF_01639">
    <property type="entry name" value="PdxY"/>
    <property type="match status" value="1"/>
</dbReference>
<dbReference type="InterPro" id="IPR013749">
    <property type="entry name" value="PM/HMP-P_kinase-1"/>
</dbReference>
<dbReference type="InterPro" id="IPR004625">
    <property type="entry name" value="PyrdxlKinase"/>
</dbReference>
<dbReference type="InterPro" id="IPR023685">
    <property type="entry name" value="Pyridoxal_kinase_PdxY"/>
</dbReference>
<dbReference type="InterPro" id="IPR029056">
    <property type="entry name" value="Ribokinase-like"/>
</dbReference>
<dbReference type="NCBIfam" id="NF004398">
    <property type="entry name" value="PRK05756.1"/>
    <property type="match status" value="1"/>
</dbReference>
<dbReference type="NCBIfam" id="TIGR00687">
    <property type="entry name" value="pyridox_kin"/>
    <property type="match status" value="1"/>
</dbReference>
<dbReference type="PANTHER" id="PTHR10534">
    <property type="entry name" value="PYRIDOXAL KINASE"/>
    <property type="match status" value="1"/>
</dbReference>
<dbReference type="PANTHER" id="PTHR10534:SF2">
    <property type="entry name" value="PYRIDOXAL KINASE"/>
    <property type="match status" value="1"/>
</dbReference>
<dbReference type="Pfam" id="PF08543">
    <property type="entry name" value="Phos_pyr_kin"/>
    <property type="match status" value="1"/>
</dbReference>
<dbReference type="SUPFAM" id="SSF53613">
    <property type="entry name" value="Ribokinase-like"/>
    <property type="match status" value="1"/>
</dbReference>
<reference key="1">
    <citation type="journal article" date="2005" name="J. Bacteriol.">
        <title>Whole-genome sequence analysis of Pseudomonas syringae pv. phaseolicola 1448A reveals divergence among pathovars in genes involved in virulence and transposition.</title>
        <authorList>
            <person name="Joardar V."/>
            <person name="Lindeberg M."/>
            <person name="Jackson R.W."/>
            <person name="Selengut J."/>
            <person name="Dodson R."/>
            <person name="Brinkac L.M."/>
            <person name="Daugherty S.C."/>
            <person name="DeBoy R.T."/>
            <person name="Durkin A.S."/>
            <person name="Gwinn Giglio M."/>
            <person name="Madupu R."/>
            <person name="Nelson W.C."/>
            <person name="Rosovitz M.J."/>
            <person name="Sullivan S.A."/>
            <person name="Crabtree J."/>
            <person name="Creasy T."/>
            <person name="Davidsen T.M."/>
            <person name="Haft D.H."/>
            <person name="Zafar N."/>
            <person name="Zhou L."/>
            <person name="Halpin R."/>
            <person name="Holley T."/>
            <person name="Khouri H.M."/>
            <person name="Feldblyum T.V."/>
            <person name="White O."/>
            <person name="Fraser C.M."/>
            <person name="Chatterjee A.K."/>
            <person name="Cartinhour S."/>
            <person name="Schneider D."/>
            <person name="Mansfield J.W."/>
            <person name="Collmer A."/>
            <person name="Buell R."/>
        </authorList>
    </citation>
    <scope>NUCLEOTIDE SEQUENCE [LARGE SCALE GENOMIC DNA]</scope>
    <source>
        <strain>1448A / Race 6</strain>
    </source>
</reference>
<keyword id="KW-0067">ATP-binding</keyword>
<keyword id="KW-0418">Kinase</keyword>
<keyword id="KW-0460">Magnesium</keyword>
<keyword id="KW-0547">Nucleotide-binding</keyword>
<keyword id="KW-0808">Transferase</keyword>
<proteinExistence type="inferred from homology"/>
<name>PDXY_PSE14</name>
<gene>
    <name evidence="1" type="primary">pdxY</name>
    <name type="ordered locus">PSPPH_5152</name>
</gene>
<protein>
    <recommendedName>
        <fullName evidence="1">Pyridoxal kinase PdxY</fullName>
        <shortName evidence="1">PL kinase</shortName>
        <ecNumber evidence="1">2.7.1.35</ecNumber>
    </recommendedName>
</protein>
<feature type="chain" id="PRO_0000269822" description="Pyridoxal kinase PdxY">
    <location>
        <begin position="1"/>
        <end position="288"/>
    </location>
</feature>
<feature type="binding site" evidence="1">
    <location>
        <position position="12"/>
    </location>
    <ligand>
        <name>substrate</name>
    </ligand>
</feature>
<feature type="binding site" evidence="1">
    <location>
        <begin position="47"/>
        <end position="48"/>
    </location>
    <ligand>
        <name>substrate</name>
    </ligand>
</feature>
<feature type="binding site" evidence="1">
    <location>
        <position position="114"/>
    </location>
    <ligand>
        <name>ATP</name>
        <dbReference type="ChEBI" id="CHEBI:30616"/>
    </ligand>
</feature>
<feature type="binding site" evidence="1">
    <location>
        <position position="151"/>
    </location>
    <ligand>
        <name>ATP</name>
        <dbReference type="ChEBI" id="CHEBI:30616"/>
    </ligand>
</feature>
<feature type="binding site" evidence="1">
    <location>
        <position position="184"/>
    </location>
    <ligand>
        <name>ATP</name>
        <dbReference type="ChEBI" id="CHEBI:30616"/>
    </ligand>
</feature>
<feature type="binding site" evidence="1">
    <location>
        <begin position="211"/>
        <end position="214"/>
    </location>
    <ligand>
        <name>ATP</name>
        <dbReference type="ChEBI" id="CHEBI:30616"/>
    </ligand>
</feature>
<feature type="binding site" evidence="1">
    <location>
        <position position="225"/>
    </location>
    <ligand>
        <name>substrate</name>
    </ligand>
</feature>
<organism>
    <name type="scientific">Pseudomonas savastanoi pv. phaseolicola (strain 1448A / Race 6)</name>
    <name type="common">Pseudomonas syringae pv. phaseolicola (strain 1448A / Race 6)</name>
    <dbReference type="NCBI Taxonomy" id="264730"/>
    <lineage>
        <taxon>Bacteria</taxon>
        <taxon>Pseudomonadati</taxon>
        <taxon>Pseudomonadota</taxon>
        <taxon>Gammaproteobacteria</taxon>
        <taxon>Pseudomonadales</taxon>
        <taxon>Pseudomonadaceae</taxon>
        <taxon>Pseudomonas</taxon>
    </lineage>
</organism>
<comment type="function">
    <text evidence="1">Pyridoxal kinase involved in the salvage pathway of pyridoxal 5'-phosphate (PLP). Catalyzes the phosphorylation of pyridoxal to PLP.</text>
</comment>
<comment type="catalytic activity">
    <reaction evidence="1">
        <text>pyridoxal + ATP = pyridoxal 5'-phosphate + ADP + H(+)</text>
        <dbReference type="Rhea" id="RHEA:10224"/>
        <dbReference type="ChEBI" id="CHEBI:15378"/>
        <dbReference type="ChEBI" id="CHEBI:17310"/>
        <dbReference type="ChEBI" id="CHEBI:30616"/>
        <dbReference type="ChEBI" id="CHEBI:456216"/>
        <dbReference type="ChEBI" id="CHEBI:597326"/>
        <dbReference type="EC" id="2.7.1.35"/>
    </reaction>
</comment>
<comment type="cofactor">
    <cofactor evidence="1">
        <name>Mg(2+)</name>
        <dbReference type="ChEBI" id="CHEBI:18420"/>
    </cofactor>
</comment>
<comment type="pathway">
    <text evidence="1">Cofactor metabolism; pyridoxal 5'-phosphate salvage; pyridoxal 5'-phosphate from pyridoxal: step 1/1.</text>
</comment>
<comment type="subunit">
    <text evidence="1">Homodimer.</text>
</comment>
<comment type="similarity">
    <text evidence="1">Belongs to the pyridoxine kinase family. PdxY subfamily.</text>
</comment>
<sequence length="288" mass="31012">MKRTPHLLAIQSHVVFGHAGNSAAVFPMQRIGVNVWPLNTVQFSNHTQYKQWTGEVLAPQQIPALIEGIAAIGELGNCDAVLSGYLGSAAQGRAILTGVARIKAANPKALYLCDPVMGHPEKGCIVAPEVSDFLLQEAAAMADFMCPNQLELDSFSGRKPESLADCLAMARALLARGPKAVVVKHLDYPGKAADGFEMLLVTAEASWHLRRPLLAFPRQPVGVGDLTSGLFLSRILLGDDLVAAFEFTAAAVHEVLLETQACGSYELELVRAQDRIAHPRVKFDAVRL</sequence>
<accession>Q48BL6</accession>
<evidence type="ECO:0000255" key="1">
    <source>
        <dbReference type="HAMAP-Rule" id="MF_01639"/>
    </source>
</evidence>